<feature type="chain" id="PRO_0000415647" description="Methyl viologen resistance protein SmvA">
    <location>
        <begin position="1"/>
        <end position="495"/>
    </location>
</feature>
<feature type="transmembrane region" description="Helical" evidence="1">
    <location>
        <begin position="5"/>
        <end position="25"/>
    </location>
</feature>
<feature type="transmembrane region" description="Helical" evidence="1">
    <location>
        <begin position="43"/>
        <end position="63"/>
    </location>
</feature>
<feature type="transmembrane region" description="Helical" evidence="1">
    <location>
        <begin position="73"/>
        <end position="93"/>
    </location>
</feature>
<feature type="transmembrane region" description="Helical" evidence="1">
    <location>
        <begin position="96"/>
        <end position="116"/>
    </location>
</feature>
<feature type="transmembrane region" description="Helical" evidence="1">
    <location>
        <begin position="135"/>
        <end position="155"/>
    </location>
</feature>
<feature type="transmembrane region" description="Helical" evidence="1">
    <location>
        <begin position="158"/>
        <end position="178"/>
    </location>
</feature>
<feature type="transmembrane region" description="Helical" evidence="1">
    <location>
        <begin position="192"/>
        <end position="212"/>
    </location>
</feature>
<feature type="transmembrane region" description="Helical" evidence="1">
    <location>
        <begin position="220"/>
        <end position="240"/>
    </location>
</feature>
<feature type="transmembrane region" description="Helical" evidence="1">
    <location>
        <begin position="260"/>
        <end position="280"/>
    </location>
</feature>
<feature type="transmembrane region" description="Helical" evidence="1">
    <location>
        <begin position="299"/>
        <end position="319"/>
    </location>
</feature>
<feature type="transmembrane region" description="Helical" evidence="1">
    <location>
        <begin position="327"/>
        <end position="347"/>
    </location>
</feature>
<feature type="transmembrane region" description="Helical" evidence="1">
    <location>
        <begin position="357"/>
        <end position="377"/>
    </location>
</feature>
<feature type="transmembrane region" description="Helical" evidence="1">
    <location>
        <begin position="391"/>
        <end position="411"/>
    </location>
</feature>
<feature type="transmembrane region" description="Helical" evidence="1">
    <location>
        <begin position="469"/>
        <end position="489"/>
    </location>
</feature>
<reference key="1">
    <citation type="journal article" date="2010" name="J. Bacteriol.">
        <title>Short-term signatures of evolutionary change in the Salmonella enterica serovar typhimurium 14028 genome.</title>
        <authorList>
            <person name="Jarvik T."/>
            <person name="Smillie C."/>
            <person name="Groisman E.A."/>
            <person name="Ochman H."/>
        </authorList>
    </citation>
    <scope>NUCLEOTIDE SEQUENCE [LARGE SCALE GENOMIC DNA]</scope>
    <source>
        <strain>14028s / SGSC 2262</strain>
    </source>
</reference>
<reference key="2">
    <citation type="journal article" date="2002" name="Mol. Microbiol.">
        <title>The Salmonella enterica sv. Typhimurium smvA, yddG and ompD (porin) genes are required for the efficient efflux of methyl viologen.</title>
        <authorList>
            <person name="Santiviago C.A."/>
            <person name="Fuentes J.A."/>
            <person name="Bueno S.M."/>
            <person name="Trombert A.N."/>
            <person name="Hildago A.A."/>
            <person name="Socias L.T."/>
            <person name="Youderian P."/>
            <person name="Mora G.C."/>
        </authorList>
    </citation>
    <scope>FUNCTION IN RESISTANCE TO METHYL VIOLOGEN AND ACRIFLAVINE</scope>
    <scope>DISRUPTION PHENOTYPE</scope>
    <source>
        <strain>14028s / SGSC 2262</strain>
    </source>
</reference>
<reference key="3">
    <citation type="journal article" date="2008" name="J. Antimicrob. Chemother.">
        <title>SmvA, and not AcrB, is the major efflux pump for acriflavine and related compounds in Salmonella enterica serovar Typhimurium.</title>
        <authorList>
            <person name="Villagra N.A."/>
            <person name="Hidalgo A.A."/>
            <person name="Santiviago C.A."/>
            <person name="Saavedra C.P."/>
            <person name="Mora G.C."/>
        </authorList>
    </citation>
    <scope>FUNCTION IN EFFLUX OF QUATERNARY AMMONIUM COMPOUNDS</scope>
    <source>
        <strain>14028s / SGSC 2262</strain>
    </source>
</reference>
<evidence type="ECO:0000255" key="1"/>
<evidence type="ECO:0000269" key="2">
    <source>
    </source>
</evidence>
<evidence type="ECO:0000269" key="3">
    <source>
    </source>
</evidence>
<evidence type="ECO:0000305" key="4"/>
<sequence length="495" mass="52134">MFRQWLTLVIIVLVYIPVAIDATVLHVAAPTLSMTLGASGNELLWIIDIYSLVMAGMVLPMGALGDRIGFKRLLMLGGTLFGLASLAAAFSHTASWLIATRVLLAIGAAMIVPATLAGIRATFCEEKHRNMALGVWAAVGSGGAAFGPLIGGILLEHFYWGSVFLINVPIVLVVMGLTARYVPRQAGRRDQPLNLGHAVMLIIAILLLVYSAKTALKGHLSLWVISFTLLTGALLLGLFIRTQLATSRPMIDMRLFTHRIILSGVVMAMTAMITLVGFELLMAQELQFVHGLSPYEAGVFMLPVMVASGFSGPIAGVLVSRLGLRLVATGGMALSALSFYGLAMTDFSTQQWQAWGLMALLGFSAASALLASTSAIMAAAPAEKAAAAGAIETMAYELGAGLGIAIFGLLLSRSFSASIRLPAGLEAQEIARASSSMGEAVQLANSLPPTQGQAILDAARHAFIWSHSVALSSAGSMLLLLAVGMWFSLAKAQRR</sequence>
<comment type="function">
    <text evidence="2 3">Major efflux pump for acriflavine and other quaternary ammonium compounds (QACs). Also required for resistance to methyl viologen.</text>
</comment>
<comment type="subcellular location">
    <subcellularLocation>
        <location evidence="4">Cell inner membrane</location>
        <topology evidence="4">Multi-pass membrane protein</topology>
    </subcellularLocation>
</comment>
<comment type="disruption phenotype">
    <text evidence="2">Mutants show increased sensitivity to methyl viologen and acriflavine.</text>
</comment>
<comment type="similarity">
    <text evidence="4">Belongs to the major facilitator superfamily. TCR/Tet family.</text>
</comment>
<proteinExistence type="evidence at protein level"/>
<protein>
    <recommendedName>
        <fullName>Methyl viologen resistance protein SmvA</fullName>
    </recommendedName>
</protein>
<organism>
    <name type="scientific">Salmonella typhimurium (strain 14028s / SGSC 2262)</name>
    <dbReference type="NCBI Taxonomy" id="588858"/>
    <lineage>
        <taxon>Bacteria</taxon>
        <taxon>Pseudomonadati</taxon>
        <taxon>Pseudomonadota</taxon>
        <taxon>Gammaproteobacteria</taxon>
        <taxon>Enterobacterales</taxon>
        <taxon>Enterobacteriaceae</taxon>
        <taxon>Salmonella</taxon>
    </lineage>
</organism>
<accession>D0ZXQ3</accession>
<keyword id="KW-0997">Cell inner membrane</keyword>
<keyword id="KW-1003">Cell membrane</keyword>
<keyword id="KW-0472">Membrane</keyword>
<keyword id="KW-0812">Transmembrane</keyword>
<keyword id="KW-1133">Transmembrane helix</keyword>
<keyword id="KW-0813">Transport</keyword>
<dbReference type="EMBL" id="CP001363">
    <property type="protein sequence ID" value="ACY88371.1"/>
    <property type="molecule type" value="Genomic_DNA"/>
</dbReference>
<dbReference type="RefSeq" id="WP_000489731.1">
    <property type="nucleotide sequence ID" value="NZ_CP043402.1"/>
</dbReference>
<dbReference type="SMR" id="D0ZXQ3"/>
<dbReference type="KEGG" id="seo:STM14_1900"/>
<dbReference type="PATRIC" id="fig|588858.6.peg.1811"/>
<dbReference type="HOGENOM" id="CLU_000960_28_2_6"/>
<dbReference type="BioCyc" id="SENT588858:STM14_RS08745-MONOMER"/>
<dbReference type="Proteomes" id="UP000002695">
    <property type="component" value="Chromosome"/>
</dbReference>
<dbReference type="GO" id="GO:0005886">
    <property type="term" value="C:plasma membrane"/>
    <property type="evidence" value="ECO:0007669"/>
    <property type="project" value="UniProtKB-SubCell"/>
</dbReference>
<dbReference type="GO" id="GO:0022857">
    <property type="term" value="F:transmembrane transporter activity"/>
    <property type="evidence" value="ECO:0007669"/>
    <property type="project" value="InterPro"/>
</dbReference>
<dbReference type="CDD" id="cd17321">
    <property type="entry name" value="MFS_MMR_MDR_like"/>
    <property type="match status" value="1"/>
</dbReference>
<dbReference type="Gene3D" id="1.20.1250.20">
    <property type="entry name" value="MFS general substrate transporter like domains"/>
    <property type="match status" value="1"/>
</dbReference>
<dbReference type="Gene3D" id="1.20.1720.10">
    <property type="entry name" value="Multidrug resistance protein D"/>
    <property type="match status" value="1"/>
</dbReference>
<dbReference type="InterPro" id="IPR011701">
    <property type="entry name" value="MFS"/>
</dbReference>
<dbReference type="InterPro" id="IPR020846">
    <property type="entry name" value="MFS_dom"/>
</dbReference>
<dbReference type="InterPro" id="IPR036259">
    <property type="entry name" value="MFS_trans_sf"/>
</dbReference>
<dbReference type="NCBIfam" id="NF011571">
    <property type="entry name" value="PRK14995.1"/>
    <property type="match status" value="1"/>
</dbReference>
<dbReference type="PANTHER" id="PTHR42718">
    <property type="entry name" value="MAJOR FACILITATOR SUPERFAMILY MULTIDRUG TRANSPORTER MFSC"/>
    <property type="match status" value="1"/>
</dbReference>
<dbReference type="PANTHER" id="PTHR42718:SF47">
    <property type="entry name" value="METHYL VIOLOGEN RESISTANCE PROTEIN SMVA"/>
    <property type="match status" value="1"/>
</dbReference>
<dbReference type="Pfam" id="PF07690">
    <property type="entry name" value="MFS_1"/>
    <property type="match status" value="1"/>
</dbReference>
<dbReference type="PRINTS" id="PR01036">
    <property type="entry name" value="TCRTETB"/>
</dbReference>
<dbReference type="SUPFAM" id="SSF103473">
    <property type="entry name" value="MFS general substrate transporter"/>
    <property type="match status" value="1"/>
</dbReference>
<dbReference type="PROSITE" id="PS50850">
    <property type="entry name" value="MFS"/>
    <property type="match status" value="1"/>
</dbReference>
<name>SMVA_SALT1</name>
<gene>
    <name type="primary">smvA</name>
    <name type="ordered locus">STM14_1900</name>
</gene>